<reference key="1">
    <citation type="journal article" date="2001" name="J. Bacteriol.">
        <title>Genome of the bacterium Streptococcus pneumoniae strain R6.</title>
        <authorList>
            <person name="Hoskins J."/>
            <person name="Alborn W.E. Jr."/>
            <person name="Arnold J."/>
            <person name="Blaszczak L.C."/>
            <person name="Burgett S."/>
            <person name="DeHoff B.S."/>
            <person name="Estrem S.T."/>
            <person name="Fritz L."/>
            <person name="Fu D.-J."/>
            <person name="Fuller W."/>
            <person name="Geringer C."/>
            <person name="Gilmour R."/>
            <person name="Glass J.S."/>
            <person name="Khoja H."/>
            <person name="Kraft A.R."/>
            <person name="Lagace R.E."/>
            <person name="LeBlanc D.J."/>
            <person name="Lee L.N."/>
            <person name="Lefkowitz E.J."/>
            <person name="Lu J."/>
            <person name="Matsushima P."/>
            <person name="McAhren S.M."/>
            <person name="McHenney M."/>
            <person name="McLeaster K."/>
            <person name="Mundy C.W."/>
            <person name="Nicas T.I."/>
            <person name="Norris F.H."/>
            <person name="O'Gara M."/>
            <person name="Peery R.B."/>
            <person name="Robertson G.T."/>
            <person name="Rockey P."/>
            <person name="Sun P.-M."/>
            <person name="Winkler M.E."/>
            <person name="Yang Y."/>
            <person name="Young-Bellido M."/>
            <person name="Zhao G."/>
            <person name="Zook C.A."/>
            <person name="Baltz R.H."/>
            <person name="Jaskunas S.R."/>
            <person name="Rosteck P.R. Jr."/>
            <person name="Skatrud P.L."/>
            <person name="Glass J.I."/>
        </authorList>
    </citation>
    <scope>NUCLEOTIDE SEQUENCE [LARGE SCALE GENOMIC DNA]</scope>
    <source>
        <strain>ATCC BAA-255 / R6</strain>
    </source>
</reference>
<name>SODM_STRR6</name>
<protein>
    <recommendedName>
        <fullName>Superoxide dismutase [Mn]</fullName>
        <ecNumber>1.15.1.1</ecNumber>
    </recommendedName>
</protein>
<evidence type="ECO:0000250" key="1"/>
<evidence type="ECO:0000305" key="2"/>
<organism>
    <name type="scientific">Streptococcus pneumoniae (strain ATCC BAA-255 / R6)</name>
    <dbReference type="NCBI Taxonomy" id="171101"/>
    <lineage>
        <taxon>Bacteria</taxon>
        <taxon>Bacillati</taxon>
        <taxon>Bacillota</taxon>
        <taxon>Bacilli</taxon>
        <taxon>Lactobacillales</taxon>
        <taxon>Streptococcaceae</taxon>
        <taxon>Streptococcus</taxon>
    </lineage>
</organism>
<proteinExistence type="inferred from homology"/>
<accession>P0A4J7</accession>
<accession>O33757</accession>
<accession>O54268</accession>
<accession>O54269</accession>
<accession>Q59949</accession>
<accession>Q9R3B6</accession>
<accession>Q9R3B8</accession>
<accession>Q9S175</accession>
<accession>Q9S176</accession>
<accession>Q9S177</accession>
<accession>Q9S447</accession>
<gene>
    <name type="primary">sodA</name>
    <name type="ordered locus">spr0674</name>
</gene>
<comment type="function">
    <text evidence="1">Destroys superoxide anion radicals which are normally produced within the cells and which are toxic to biological systems. May play a critical role against oxidative stress, affecting both the survival and the virulence of S.pneumoniae (By similarity).</text>
</comment>
<comment type="catalytic activity">
    <reaction>
        <text>2 superoxide + 2 H(+) = H2O2 + O2</text>
        <dbReference type="Rhea" id="RHEA:20696"/>
        <dbReference type="ChEBI" id="CHEBI:15378"/>
        <dbReference type="ChEBI" id="CHEBI:15379"/>
        <dbReference type="ChEBI" id="CHEBI:16240"/>
        <dbReference type="ChEBI" id="CHEBI:18421"/>
        <dbReference type="EC" id="1.15.1.1"/>
    </reaction>
</comment>
<comment type="cofactor">
    <cofactor evidence="1">
        <name>Mn(2+)</name>
        <dbReference type="ChEBI" id="CHEBI:29035"/>
    </cofactor>
    <text evidence="1">Binds 1 Mn(2+) ion per subunit.</text>
</comment>
<comment type="subunit">
    <text evidence="1">Homodimer.</text>
</comment>
<comment type="similarity">
    <text evidence="2">Belongs to the iron/manganese superoxide dismutase family.</text>
</comment>
<feature type="initiator methionine" description="Removed" evidence="1">
    <location>
        <position position="1"/>
    </location>
</feature>
<feature type="chain" id="PRO_0000160098" description="Superoxide dismutase [Mn]">
    <location>
        <begin position="2"/>
        <end position="201"/>
    </location>
</feature>
<feature type="binding site" evidence="1">
    <location>
        <position position="27"/>
    </location>
    <ligand>
        <name>Mn(2+)</name>
        <dbReference type="ChEBI" id="CHEBI:29035"/>
    </ligand>
</feature>
<feature type="binding site" evidence="1">
    <location>
        <position position="81"/>
    </location>
    <ligand>
        <name>Mn(2+)</name>
        <dbReference type="ChEBI" id="CHEBI:29035"/>
    </ligand>
</feature>
<feature type="binding site" evidence="1">
    <location>
        <position position="163"/>
    </location>
    <ligand>
        <name>Mn(2+)</name>
        <dbReference type="ChEBI" id="CHEBI:29035"/>
    </ligand>
</feature>
<feature type="binding site" evidence="1">
    <location>
        <position position="167"/>
    </location>
    <ligand>
        <name>Mn(2+)</name>
        <dbReference type="ChEBI" id="CHEBI:29035"/>
    </ligand>
</feature>
<keyword id="KW-0464">Manganese</keyword>
<keyword id="KW-0479">Metal-binding</keyword>
<keyword id="KW-0560">Oxidoreductase</keyword>
<keyword id="KW-1185">Reference proteome</keyword>
<dbReference type="EC" id="1.15.1.1"/>
<dbReference type="EMBL" id="AE007317">
    <property type="protein sequence ID" value="AAK99478.1"/>
    <property type="molecule type" value="Genomic_DNA"/>
</dbReference>
<dbReference type="PIR" id="B97956">
    <property type="entry name" value="B97956"/>
</dbReference>
<dbReference type="RefSeq" id="NP_358268.1">
    <property type="nucleotide sequence ID" value="NC_003098.1"/>
</dbReference>
<dbReference type="RefSeq" id="WP_000974746.1">
    <property type="nucleotide sequence ID" value="NC_003098.1"/>
</dbReference>
<dbReference type="SMR" id="P0A4J7"/>
<dbReference type="STRING" id="171101.spr0674"/>
<dbReference type="GeneID" id="93739911"/>
<dbReference type="KEGG" id="spr:spr0674"/>
<dbReference type="PATRIC" id="fig|171101.6.peg.746"/>
<dbReference type="eggNOG" id="COG0605">
    <property type="taxonomic scope" value="Bacteria"/>
</dbReference>
<dbReference type="HOGENOM" id="CLU_031625_0_1_9"/>
<dbReference type="Proteomes" id="UP000000586">
    <property type="component" value="Chromosome"/>
</dbReference>
<dbReference type="GO" id="GO:0005737">
    <property type="term" value="C:cytoplasm"/>
    <property type="evidence" value="ECO:0000318"/>
    <property type="project" value="GO_Central"/>
</dbReference>
<dbReference type="GO" id="GO:0046872">
    <property type="term" value="F:metal ion binding"/>
    <property type="evidence" value="ECO:0007669"/>
    <property type="project" value="UniProtKB-KW"/>
</dbReference>
<dbReference type="GO" id="GO:0004784">
    <property type="term" value="F:superoxide dismutase activity"/>
    <property type="evidence" value="ECO:0000318"/>
    <property type="project" value="GO_Central"/>
</dbReference>
<dbReference type="GO" id="GO:0019430">
    <property type="term" value="P:removal of superoxide radicals"/>
    <property type="evidence" value="ECO:0000318"/>
    <property type="project" value="GO_Central"/>
</dbReference>
<dbReference type="FunFam" id="1.10.287.990:FF:000001">
    <property type="entry name" value="Superoxide dismutase"/>
    <property type="match status" value="1"/>
</dbReference>
<dbReference type="FunFam" id="3.55.40.20:FF:000001">
    <property type="entry name" value="Superoxide dismutase"/>
    <property type="match status" value="1"/>
</dbReference>
<dbReference type="Gene3D" id="1.10.287.990">
    <property type="entry name" value="Fe,Mn superoxide dismutase (SOD) domain"/>
    <property type="match status" value="1"/>
</dbReference>
<dbReference type="Gene3D" id="3.55.40.20">
    <property type="entry name" value="Iron/manganese superoxide dismutase, C-terminal domain"/>
    <property type="match status" value="1"/>
</dbReference>
<dbReference type="InterPro" id="IPR001189">
    <property type="entry name" value="Mn/Fe_SOD"/>
</dbReference>
<dbReference type="InterPro" id="IPR019833">
    <property type="entry name" value="Mn/Fe_SOD_BS"/>
</dbReference>
<dbReference type="InterPro" id="IPR019832">
    <property type="entry name" value="Mn/Fe_SOD_C"/>
</dbReference>
<dbReference type="InterPro" id="IPR019831">
    <property type="entry name" value="Mn/Fe_SOD_N"/>
</dbReference>
<dbReference type="InterPro" id="IPR036324">
    <property type="entry name" value="Mn/Fe_SOD_N_sf"/>
</dbReference>
<dbReference type="InterPro" id="IPR036314">
    <property type="entry name" value="SOD_C_sf"/>
</dbReference>
<dbReference type="PANTHER" id="PTHR43595">
    <property type="entry name" value="37S RIBOSOMAL PROTEIN S26, MITOCHONDRIAL"/>
    <property type="match status" value="1"/>
</dbReference>
<dbReference type="PANTHER" id="PTHR43595:SF2">
    <property type="entry name" value="SMALL RIBOSOMAL SUBUNIT PROTEIN MS42"/>
    <property type="match status" value="1"/>
</dbReference>
<dbReference type="Pfam" id="PF02777">
    <property type="entry name" value="Sod_Fe_C"/>
    <property type="match status" value="1"/>
</dbReference>
<dbReference type="Pfam" id="PF00081">
    <property type="entry name" value="Sod_Fe_N"/>
    <property type="match status" value="1"/>
</dbReference>
<dbReference type="PIRSF" id="PIRSF000349">
    <property type="entry name" value="SODismutase"/>
    <property type="match status" value="1"/>
</dbReference>
<dbReference type="PRINTS" id="PR01703">
    <property type="entry name" value="MNSODISMTASE"/>
</dbReference>
<dbReference type="SUPFAM" id="SSF54719">
    <property type="entry name" value="Fe,Mn superoxide dismutase (SOD), C-terminal domain"/>
    <property type="match status" value="1"/>
</dbReference>
<dbReference type="SUPFAM" id="SSF46609">
    <property type="entry name" value="Fe,Mn superoxide dismutase (SOD), N-terminal domain"/>
    <property type="match status" value="1"/>
</dbReference>
<dbReference type="PROSITE" id="PS00088">
    <property type="entry name" value="SOD_MN"/>
    <property type="match status" value="1"/>
</dbReference>
<sequence>MAIILPELPYAYDALEPYIDAETMHLHHDKHHQTYVNNANAALEKHPEIGEDLEALLADVESIPADIRQALINNGGGHLNHALFWELMTPEKTAPSAELAAAIDATFGSFEEFQAAFTAAATTRFGSGWAWLVVNKEGKLEVTSTANQDTPISEGKKPILGLDVWEHAYYVKYRNVRPDYIKAFFSVINWNKVDELYAAAK</sequence>